<keyword id="KW-1003">Cell membrane</keyword>
<keyword id="KW-0444">Lipid biosynthesis</keyword>
<keyword id="KW-0443">Lipid metabolism</keyword>
<keyword id="KW-0472">Membrane</keyword>
<keyword id="KW-0594">Phospholipid biosynthesis</keyword>
<keyword id="KW-1208">Phospholipid metabolism</keyword>
<keyword id="KW-1185">Reference proteome</keyword>
<keyword id="KW-0677">Repeat</keyword>
<keyword id="KW-0808">Transferase</keyword>
<keyword id="KW-0812">Transmembrane</keyword>
<keyword id="KW-1133">Transmembrane helix</keyword>
<gene>
    <name evidence="1" type="primary">clsA</name>
    <name type="synonym">cls</name>
    <name type="ordered locus">bbp_253</name>
</gene>
<sequence>MINYLFTITTWLIIISYWFIIIIVTCRILSKRRAISSSAAWLLVIYIIPFIGICTWFLLEEPYLGTRKLKLIKSVWSKKNKHFNNLKSHNYIFENNNSEVARSLFKLCKYRQGISGIKFNKLKLLKNTKDVIKNLVRDIYLAKNTIEIVFYIWKPGGLADNVAIALIQSAKRGIKCRLMLDSAGSLEFFRSKWVDMMQQSGIQIVEALKINLLHFFFRRMDLRQHRKFILIDNYITYIGSMNLVDPYLFKKSLGIGQWIDLMTRIEGPISTTMGAIYSCDWEVETGQQISPKRVKNNLIIPTYPIKECTSIVQVIASGPGFTEDMIHQALLTAIYSAQQKLTMTTPYLVPSDDLLRAICTAAQRGVEVILIIPKSHDSLLVKWASRVFFSELLESGVKIYQFKKGLLHSKSVLVDKQLSLIGTVNLDMRSLWLNFEITLVIDDKNFGKSLAIIHNEYISHSSLLDPKLWKIRSYWKKIIEKLFYFLSPLL</sequence>
<evidence type="ECO:0000255" key="1">
    <source>
        <dbReference type="HAMAP-Rule" id="MF_00190"/>
    </source>
</evidence>
<feature type="chain" id="PRO_0000201251" description="Cardiolipin synthase A">
    <location>
        <begin position="1"/>
        <end position="490"/>
    </location>
</feature>
<feature type="transmembrane region" description="Helical" evidence="1">
    <location>
        <begin position="4"/>
        <end position="24"/>
    </location>
</feature>
<feature type="transmembrane region" description="Helical" evidence="1">
    <location>
        <begin position="39"/>
        <end position="59"/>
    </location>
</feature>
<feature type="domain" description="PLD phosphodiesterase 1" evidence="1">
    <location>
        <begin position="220"/>
        <end position="247"/>
    </location>
</feature>
<feature type="domain" description="PLD phosphodiesterase 2" evidence="1">
    <location>
        <begin position="403"/>
        <end position="430"/>
    </location>
</feature>
<feature type="active site" evidence="1">
    <location>
        <position position="225"/>
    </location>
</feature>
<feature type="active site" evidence="1">
    <location>
        <position position="227"/>
    </location>
</feature>
<feature type="active site" evidence="1">
    <location>
        <position position="232"/>
    </location>
</feature>
<feature type="active site" evidence="1">
    <location>
        <position position="408"/>
    </location>
</feature>
<feature type="active site" evidence="1">
    <location>
        <position position="410"/>
    </location>
</feature>
<feature type="active site" evidence="1">
    <location>
        <position position="415"/>
    </location>
</feature>
<dbReference type="EC" id="2.7.8.-" evidence="1"/>
<dbReference type="EMBL" id="AE016826">
    <property type="protein sequence ID" value="AAO26980.1"/>
    <property type="molecule type" value="Genomic_DNA"/>
</dbReference>
<dbReference type="SMR" id="Q89AL5"/>
<dbReference type="STRING" id="224915.bbp_253"/>
<dbReference type="KEGG" id="bab:bbp_253"/>
<dbReference type="eggNOG" id="COG1502">
    <property type="taxonomic scope" value="Bacteria"/>
</dbReference>
<dbReference type="HOGENOM" id="CLU_038053_1_0_6"/>
<dbReference type="OrthoDB" id="9814092at2"/>
<dbReference type="Proteomes" id="UP000000601">
    <property type="component" value="Chromosome"/>
</dbReference>
<dbReference type="GO" id="GO:0005886">
    <property type="term" value="C:plasma membrane"/>
    <property type="evidence" value="ECO:0007669"/>
    <property type="project" value="UniProtKB-SubCell"/>
</dbReference>
<dbReference type="GO" id="GO:0008808">
    <property type="term" value="F:cardiolipin synthase activity"/>
    <property type="evidence" value="ECO:0007669"/>
    <property type="project" value="InterPro"/>
</dbReference>
<dbReference type="GO" id="GO:0032049">
    <property type="term" value="P:cardiolipin biosynthetic process"/>
    <property type="evidence" value="ECO:0007669"/>
    <property type="project" value="InterPro"/>
</dbReference>
<dbReference type="CDD" id="cd09152">
    <property type="entry name" value="PLDc_EcCLS_like_1"/>
    <property type="match status" value="1"/>
</dbReference>
<dbReference type="CDD" id="cd09158">
    <property type="entry name" value="PLDc_EcCLS_like_2"/>
    <property type="match status" value="1"/>
</dbReference>
<dbReference type="Gene3D" id="3.30.870.10">
    <property type="entry name" value="Endonuclease Chain A"/>
    <property type="match status" value="2"/>
</dbReference>
<dbReference type="HAMAP" id="MF_00190">
    <property type="entry name" value="Cardiolipin_synth_ClsA"/>
    <property type="match status" value="1"/>
</dbReference>
<dbReference type="InterPro" id="IPR022924">
    <property type="entry name" value="Cardiolipin_synthase"/>
</dbReference>
<dbReference type="InterPro" id="IPR030840">
    <property type="entry name" value="CL_synthase_A"/>
</dbReference>
<dbReference type="InterPro" id="IPR027379">
    <property type="entry name" value="CLS_N"/>
</dbReference>
<dbReference type="InterPro" id="IPR025202">
    <property type="entry name" value="PLD-like_dom"/>
</dbReference>
<dbReference type="InterPro" id="IPR001736">
    <property type="entry name" value="PLipase_D/transphosphatidylase"/>
</dbReference>
<dbReference type="NCBIfam" id="TIGR04265">
    <property type="entry name" value="bac_cardiolipin"/>
    <property type="match status" value="1"/>
</dbReference>
<dbReference type="PANTHER" id="PTHR21248">
    <property type="entry name" value="CARDIOLIPIN SYNTHASE"/>
    <property type="match status" value="1"/>
</dbReference>
<dbReference type="PANTHER" id="PTHR21248:SF22">
    <property type="entry name" value="PHOSPHOLIPASE D"/>
    <property type="match status" value="1"/>
</dbReference>
<dbReference type="Pfam" id="PF13091">
    <property type="entry name" value="PLDc_2"/>
    <property type="match status" value="2"/>
</dbReference>
<dbReference type="Pfam" id="PF13396">
    <property type="entry name" value="PLDc_N"/>
    <property type="match status" value="1"/>
</dbReference>
<dbReference type="SMART" id="SM00155">
    <property type="entry name" value="PLDc"/>
    <property type="match status" value="2"/>
</dbReference>
<dbReference type="SUPFAM" id="SSF56024">
    <property type="entry name" value="Phospholipase D/nuclease"/>
    <property type="match status" value="2"/>
</dbReference>
<dbReference type="PROSITE" id="PS50035">
    <property type="entry name" value="PLD"/>
    <property type="match status" value="2"/>
</dbReference>
<reference key="1">
    <citation type="journal article" date="2003" name="Proc. Natl. Acad. Sci. U.S.A.">
        <title>Reductive genome evolution in Buchnera aphidicola.</title>
        <authorList>
            <person name="van Ham R.C.H.J."/>
            <person name="Kamerbeek J."/>
            <person name="Palacios C."/>
            <person name="Rausell C."/>
            <person name="Abascal F."/>
            <person name="Bastolla U."/>
            <person name="Fernandez J.M."/>
            <person name="Jimenez L."/>
            <person name="Postigo M."/>
            <person name="Silva F.J."/>
            <person name="Tamames J."/>
            <person name="Viguera E."/>
            <person name="Latorre A."/>
            <person name="Valencia A."/>
            <person name="Moran F."/>
            <person name="Moya A."/>
        </authorList>
    </citation>
    <scope>NUCLEOTIDE SEQUENCE [LARGE SCALE GENOMIC DNA]</scope>
    <source>
        <strain>Bp</strain>
    </source>
</reference>
<protein>
    <recommendedName>
        <fullName evidence="1">Cardiolipin synthase A</fullName>
        <shortName evidence="1">CL synthase</shortName>
        <ecNumber evidence="1">2.7.8.-</ecNumber>
    </recommendedName>
</protein>
<name>CLSA_BUCBP</name>
<organism>
    <name type="scientific">Buchnera aphidicola subsp. Baizongia pistaciae (strain Bp)</name>
    <dbReference type="NCBI Taxonomy" id="224915"/>
    <lineage>
        <taxon>Bacteria</taxon>
        <taxon>Pseudomonadati</taxon>
        <taxon>Pseudomonadota</taxon>
        <taxon>Gammaproteobacteria</taxon>
        <taxon>Enterobacterales</taxon>
        <taxon>Erwiniaceae</taxon>
        <taxon>Buchnera</taxon>
    </lineage>
</organism>
<accession>Q89AL5</accession>
<proteinExistence type="inferred from homology"/>
<comment type="function">
    <text evidence="1">Catalyzes the reversible phosphatidyl group transfer from one phosphatidylglycerol molecule to another to form cardiolipin (CL) (diphosphatidylglycerol) and glycerol.</text>
</comment>
<comment type="catalytic activity">
    <reaction evidence="1">
        <text>2 a 1,2-diacyl-sn-glycero-3-phospho-(1'-sn-glycerol) = a cardiolipin + glycerol</text>
        <dbReference type="Rhea" id="RHEA:31451"/>
        <dbReference type="ChEBI" id="CHEBI:17754"/>
        <dbReference type="ChEBI" id="CHEBI:62237"/>
        <dbReference type="ChEBI" id="CHEBI:64716"/>
    </reaction>
</comment>
<comment type="subcellular location">
    <subcellularLocation>
        <location evidence="1">Cell membrane</location>
        <topology evidence="1">Multi-pass membrane protein</topology>
    </subcellularLocation>
</comment>
<comment type="similarity">
    <text evidence="1">Belongs to the phospholipase D family. Cardiolipin synthase subfamily. ClsA sub-subfamily.</text>
</comment>